<dbReference type="EMBL" id="X93514">
    <property type="protein sequence ID" value="CAA63771.1"/>
    <property type="molecule type" value="Genomic_DNA"/>
</dbReference>
<dbReference type="EMBL" id="BA000036">
    <property type="protein sequence ID" value="BAB98285.1"/>
    <property type="molecule type" value="Genomic_DNA"/>
</dbReference>
<dbReference type="EMBL" id="BX927150">
    <property type="protein sequence ID" value="CAF19598.1"/>
    <property type="molecule type" value="Genomic_DNA"/>
</dbReference>
<dbReference type="RefSeq" id="NP_600119.1">
    <property type="nucleotide sequence ID" value="NC_003450.3"/>
</dbReference>
<dbReference type="RefSeq" id="WP_011265645.1">
    <property type="nucleotide sequence ID" value="NC_003450.3"/>
</dbReference>
<dbReference type="PDB" id="2WIT">
    <property type="method" value="X-ray"/>
    <property type="resolution" value="3.35 A"/>
    <property type="chains" value="A/B/C=30-595"/>
</dbReference>
<dbReference type="PDB" id="3P03">
    <property type="method" value="X-ray"/>
    <property type="resolution" value="3.35 A"/>
    <property type="chains" value="A/B/C=30-595"/>
</dbReference>
<dbReference type="PDB" id="4AIN">
    <property type="method" value="X-ray"/>
    <property type="resolution" value="3.10 A"/>
    <property type="chains" value="A/B/C=41-579"/>
</dbReference>
<dbReference type="PDB" id="4C7R">
    <property type="method" value="X-ray"/>
    <property type="resolution" value="2.70 A"/>
    <property type="chains" value="A/B/C=30-595"/>
</dbReference>
<dbReference type="PDB" id="4DOJ">
    <property type="method" value="X-ray"/>
    <property type="resolution" value="3.25 A"/>
    <property type="chains" value="A/B/C=30-595"/>
</dbReference>
<dbReference type="PDB" id="4LLH">
    <property type="method" value="X-ray"/>
    <property type="resolution" value="2.80 A"/>
    <property type="chains" value="A/B/C=30-595"/>
</dbReference>
<dbReference type="PDBsum" id="2WIT"/>
<dbReference type="PDBsum" id="3P03"/>
<dbReference type="PDBsum" id="4AIN"/>
<dbReference type="PDBsum" id="4C7R"/>
<dbReference type="PDBsum" id="4DOJ"/>
<dbReference type="PDBsum" id="4LLH"/>
<dbReference type="SMR" id="P54582"/>
<dbReference type="DIP" id="DIP-59738N"/>
<dbReference type="MINT" id="P54582"/>
<dbReference type="STRING" id="196627.cg1016"/>
<dbReference type="TCDB" id="2.A.15.1.10">
    <property type="family name" value="the betaine/carnitine/choline transporter (bcct) family"/>
</dbReference>
<dbReference type="GeneID" id="1018885"/>
<dbReference type="KEGG" id="cgb:cg1016"/>
<dbReference type="KEGG" id="cgl:Cgl0892"/>
<dbReference type="PATRIC" id="fig|196627.13.peg.875"/>
<dbReference type="eggNOG" id="COG1292">
    <property type="taxonomic scope" value="Bacteria"/>
</dbReference>
<dbReference type="HOGENOM" id="CLU_010118_4_0_11"/>
<dbReference type="OrthoDB" id="9775735at2"/>
<dbReference type="BioCyc" id="CORYNE:G18NG-10462-MONOMER"/>
<dbReference type="EvolutionaryTrace" id="P54582"/>
<dbReference type="Proteomes" id="UP000000582">
    <property type="component" value="Chromosome"/>
</dbReference>
<dbReference type="Proteomes" id="UP000001009">
    <property type="component" value="Chromosome"/>
</dbReference>
<dbReference type="GO" id="GO:0005886">
    <property type="term" value="C:plasma membrane"/>
    <property type="evidence" value="ECO:0007669"/>
    <property type="project" value="UniProtKB-SubCell"/>
</dbReference>
<dbReference type="GO" id="GO:0042802">
    <property type="term" value="F:identical protein binding"/>
    <property type="evidence" value="ECO:0000353"/>
    <property type="project" value="IntAct"/>
</dbReference>
<dbReference type="GO" id="GO:0046872">
    <property type="term" value="F:metal ion binding"/>
    <property type="evidence" value="ECO:0007669"/>
    <property type="project" value="UniProtKB-KW"/>
</dbReference>
<dbReference type="GO" id="GO:0015293">
    <property type="term" value="F:symporter activity"/>
    <property type="evidence" value="ECO:0007669"/>
    <property type="project" value="UniProtKB-KW"/>
</dbReference>
<dbReference type="Gene3D" id="1.20.5.430">
    <property type="match status" value="1"/>
</dbReference>
<dbReference type="InterPro" id="IPR018093">
    <property type="entry name" value="BCCT_CS"/>
</dbReference>
<dbReference type="InterPro" id="IPR000060">
    <property type="entry name" value="BCCT_transptr"/>
</dbReference>
<dbReference type="NCBIfam" id="TIGR00842">
    <property type="entry name" value="bcct"/>
    <property type="match status" value="1"/>
</dbReference>
<dbReference type="PANTHER" id="PTHR30047:SF7">
    <property type="entry name" value="HIGH-AFFINITY CHOLINE TRANSPORT PROTEIN"/>
    <property type="match status" value="1"/>
</dbReference>
<dbReference type="PANTHER" id="PTHR30047">
    <property type="entry name" value="HIGH-AFFINITY CHOLINE TRANSPORT PROTEIN-RELATED"/>
    <property type="match status" value="1"/>
</dbReference>
<dbReference type="Pfam" id="PF02028">
    <property type="entry name" value="BCCT"/>
    <property type="match status" value="1"/>
</dbReference>
<dbReference type="PROSITE" id="PS01303">
    <property type="entry name" value="BCCT"/>
    <property type="match status" value="1"/>
</dbReference>
<reference key="1">
    <citation type="journal article" date="1996" name="J. Bacteriol.">
        <title>Isolation, characterization, and expression of the Corynebacterium glutamicum betP gene, encoding the transport system for the compatible solute glycine betaine.</title>
        <authorList>
            <person name="Peter H."/>
            <person name="Burkovski A."/>
            <person name="Kraemer R."/>
        </authorList>
    </citation>
    <scope>NUCLEOTIDE SEQUENCE [GENOMIC DNA]</scope>
    <scope>DISRUPTION PHENOTYPE</scope>
    <source>
        <strain>ATCC 13032 / DSM 20300 / JCM 1318 / BCRC 11384 / CCUG 27702 / LMG 3730 / NBRC 12168 / NCIMB 10025 / NRRL B-2784 / 534</strain>
    </source>
</reference>
<reference key="2">
    <citation type="journal article" date="2003" name="Appl. Microbiol. Biotechnol.">
        <title>The Corynebacterium glutamicum genome: features and impacts on biotechnological processes.</title>
        <authorList>
            <person name="Ikeda M."/>
            <person name="Nakagawa S."/>
        </authorList>
    </citation>
    <scope>NUCLEOTIDE SEQUENCE [LARGE SCALE GENOMIC DNA]</scope>
    <source>
        <strain>ATCC 13032 / DSM 20300 / JCM 1318 / BCRC 11384 / CCUG 27702 / LMG 3730 / NBRC 12168 / NCIMB 10025 / NRRL B-2784 / 534</strain>
    </source>
</reference>
<reference key="3">
    <citation type="journal article" date="2003" name="J. Biotechnol.">
        <title>The complete Corynebacterium glutamicum ATCC 13032 genome sequence and its impact on the production of L-aspartate-derived amino acids and vitamins.</title>
        <authorList>
            <person name="Kalinowski J."/>
            <person name="Bathe B."/>
            <person name="Bartels D."/>
            <person name="Bischoff N."/>
            <person name="Bott M."/>
            <person name="Burkovski A."/>
            <person name="Dusch N."/>
            <person name="Eggeling L."/>
            <person name="Eikmanns B.J."/>
            <person name="Gaigalat L."/>
            <person name="Goesmann A."/>
            <person name="Hartmann M."/>
            <person name="Huthmacher K."/>
            <person name="Kraemer R."/>
            <person name="Linke B."/>
            <person name="McHardy A.C."/>
            <person name="Meyer F."/>
            <person name="Moeckel B."/>
            <person name="Pfefferle W."/>
            <person name="Puehler A."/>
            <person name="Rey D.A."/>
            <person name="Rueckert C."/>
            <person name="Rupp O."/>
            <person name="Sahm H."/>
            <person name="Wendisch V.F."/>
            <person name="Wiegraebe I."/>
            <person name="Tauch A."/>
        </authorList>
    </citation>
    <scope>NUCLEOTIDE SEQUENCE [LARGE SCALE GENOMIC DNA]</scope>
    <source>
        <strain>ATCC 13032 / DSM 20300 / JCM 1318 / BCRC 11384 / CCUG 27702 / LMG 3730 / NBRC 12168 / NCIMB 10025 / NRRL B-2784 / 534</strain>
    </source>
</reference>
<reference key="4">
    <citation type="journal article" date="1995" name="J. Bacteriol.">
        <title>Glycine betaine uptake after hyperosmotic shift in Corynebacterium glutamicum.</title>
        <authorList>
            <person name="Farwick M."/>
            <person name="Siewe R.M."/>
            <person name="Kraemer R."/>
        </authorList>
    </citation>
    <scope>FUNCTION</scope>
    <scope>ACTIVITY REGULATION</scope>
    <scope>BIOPHYSICOCHEMICAL PROPERTIES</scope>
    <scope>INDUCTION</scope>
    <source>
        <strain>ATCC 13032 / DSM 20300 / JCM 1318 / BCRC 11384 / CCUG 27702 / LMG 3730 / NBRC 12168 / NCIMB 10025 / NRRL B-2784 / 534</strain>
    </source>
</reference>
<reference key="5">
    <citation type="journal article" date="1998" name="J. Biol. Chem.">
        <title>Osmo-sensing by N- and C-terminal extensions of the glycine betaine uptake system BetP of Corynebacterium glutamicum.</title>
        <authorList>
            <person name="Peter H."/>
            <person name="Burkovski A."/>
            <person name="Kraemer R."/>
        </authorList>
    </citation>
    <scope>FUNCTION</scope>
    <scope>ACTIVITY REGULATION</scope>
    <scope>DOMAIN</scope>
    <source>
        <strain>ATCC 13032 / DSM 20300 / JCM 1318 / BCRC 11384 / CCUG 27702 / LMG 3730 / NBRC 12168 / NCIMB 10025 / NRRL B-2784 / 534</strain>
    </source>
</reference>
<reference key="6">
    <citation type="journal article" date="2000" name="J. Biol. Chem.">
        <title>Osmosensor and osmoregulator properties of the betaine carrier BetP from Corynebacterium glutamicum in proteoliposomes.</title>
        <authorList>
            <person name="Ruebenhagen R."/>
            <person name="Roensch H."/>
            <person name="Jung H."/>
            <person name="Kraemer R."/>
            <person name="Morbach S."/>
        </authorList>
    </citation>
    <scope>FUNCTION</scope>
    <scope>ACTIVITY REGULATION</scope>
    <scope>BIOPHYSICOCHEMICAL PROPERTIES</scope>
</reference>
<reference key="7">
    <citation type="journal article" date="2001" name="EMBO J.">
        <title>The osmoreactive betaine carrier BetP from Corynebacterium glutamicum is a sensor for cytoplasmic K+.</title>
        <authorList>
            <person name="Ruebenhagen R."/>
            <person name="Morbach S."/>
            <person name="Kraemer R."/>
        </authorList>
    </citation>
    <scope>FUNCTION</scope>
    <scope>ACTIVITY REGULATION</scope>
</reference>
<reference key="8">
    <citation type="journal article" date="2004" name="Biochemistry">
        <title>The C-terminal domain of the betaine carrier BetP of Corynebacterium glutamicum is directly involved in sensing K+ as an osmotic stimulus.</title>
        <authorList>
            <person name="Schiller D."/>
            <person name="Ruebenhagen R."/>
            <person name="Kraemer R."/>
            <person name="Morbach S."/>
        </authorList>
    </citation>
    <scope>FUNCTION</scope>
    <scope>ACTIVITY REGULATION</scope>
    <scope>BIOPHYSICOCHEMICAL PROPERTIES</scope>
    <scope>DOMAIN</scope>
</reference>
<reference key="9">
    <citation type="journal article" date="2004" name="FEBS Lett.">
        <title>Cation specificity of osmosensing by the betaine carrier BetP of Corynebacterium glutamicum.</title>
        <authorList>
            <person name="Schiller D."/>
            <person name="Kraemer R."/>
            <person name="Morbach S."/>
        </authorList>
    </citation>
    <scope>ACTIVITY REGULATION</scope>
</reference>
<reference key="10">
    <citation type="journal article" date="2004" name="J. Mol. Biol.">
        <title>Projection structure and oligomeric state of the osmoregulated sodium/glycine betaine symporter BetP of Corynebacterium glutamicum.</title>
        <authorList>
            <person name="Ziegler C."/>
            <person name="Morbach S."/>
            <person name="Schiller D."/>
            <person name="Kraemer R."/>
            <person name="Tziatzios C."/>
            <person name="Schubert D."/>
            <person name="Kuehlbrandt W."/>
        </authorList>
    </citation>
    <scope>SUBUNIT</scope>
</reference>
<reference key="11">
    <citation type="journal article" date="2005" name="J. Bacteriol.">
        <title>Chill activation of compatible solute transporters in Corynebacterium glutamicum at the level of transport activity.</title>
        <authorList>
            <person name="Ozcan N."/>
            <person name="Kraemer R."/>
            <person name="Morbach S."/>
        </authorList>
    </citation>
    <scope>ACTIVITY REGULATION</scope>
    <source>
        <strain>ATCC 13032 / DSM 20300 / JCM 1318 / BCRC 11384 / CCUG 27702 / LMG 3730 / NBRC 12168 / NCIMB 10025 / NRRL B-2784 / 534</strain>
    </source>
</reference>
<reference key="12">
    <citation type="journal article" date="2007" name="Appl. Microbiol. Biotechnol.">
        <title>Characterization of compatible solute transporter multiplicity in Corynebacterium glutamicum.</title>
        <authorList>
            <person name="Weinand M."/>
            <person name="Kraemer R."/>
            <person name="Morbach S."/>
        </authorList>
    </citation>
    <scope>INDUCTION</scope>
    <scope>SUBCELLULAR LOCATION</scope>
    <source>
        <strain>ATCC 13032 / DSM 20300 / JCM 1318 / BCRC 11384 / CCUG 27702 / LMG 3730 / NBRC 12168 / NCIMB 10025 / NRRL B-2784 / 534</strain>
    </source>
</reference>
<reference key="13">
    <citation type="journal article" date="2007" name="J. Bacteriol.">
        <title>Osmolality, temperature, and membrane lipid composition modulate the activity of betaine transporter BetP in Corynebacterium glutamicum.</title>
        <authorList>
            <person name="Ozcan N."/>
            <person name="Ejsing C.S."/>
            <person name="Shevchenko A."/>
            <person name="Lipski A."/>
            <person name="Morbach S."/>
            <person name="Kraemer R."/>
        </authorList>
    </citation>
    <scope>ACTIVITY REGULATION</scope>
    <source>
        <strain>ATCC 13032 / DSM 20300 / JCM 1318 / BCRC 11384 / CCUG 27702 / LMG 3730 / NBRC 12168 / NCIMB 10025 / NRRL B-2784 / 534</strain>
    </source>
</reference>
<reference key="14">
    <citation type="journal article" date="2011" name="EMBO Rep.">
        <title>The role of trimerization in the osmoregulated betaine transporter BetP.</title>
        <authorList>
            <person name="Perez C."/>
            <person name="Khafizov K."/>
            <person name="Forrest L.R."/>
            <person name="Kraemer R."/>
            <person name="Ziegler C."/>
        </authorList>
    </citation>
    <scope>SUBUNIT</scope>
    <scope>MUTAGENESIS OF TRP-101 AND THR-351</scope>
</reference>
<reference evidence="25" key="15">
    <citation type="journal article" date="2009" name="Nature">
        <title>Molecular basis of transport and regulation in the Na(+)/betaine symporter BetP.</title>
        <authorList>
            <person name="Ressl S."/>
            <person name="Terwisscha van Scheltinga A.C."/>
            <person name="Vonrhein C."/>
            <person name="Ott V."/>
            <person name="Ziegler C."/>
        </authorList>
    </citation>
    <scope>X-RAY CRYSTALLOGRAPHY (3.35 ANGSTROMS) OF 30-595 IN COMPLEX WITH GLYCINE BETAINE</scope>
    <scope>FUNCTION</scope>
    <scope>ACTIVITY REGULATION</scope>
    <scope>SUBUNIT</scope>
    <scope>SUBCELLULAR LOCATION</scope>
    <scope>TOPOLOGY</scope>
    <scope>MUTAGENESIS OF GLU-135; TRP-189; TRP-194; TYR-197; ARG-210; GLY-301; TRP-362; TRP-366; TRP-371; TRP-374; TRP-377; ARG-387 AND ARG-392</scope>
</reference>
<reference evidence="26" key="16">
    <citation type="journal article" date="2011" name="EMBO J.">
        <title>Substrate specificity and ion coupling in the Na+/betaine symporter BetP.</title>
        <authorList>
            <person name="Perez C."/>
            <person name="Koshy C."/>
            <person name="Ressl S."/>
            <person name="Nicklisch S."/>
            <person name="Kramer R."/>
            <person name="Ziegler C."/>
        </authorList>
    </citation>
    <scope>X-RAY CRYSTALLOGRAPHY (3.35 ANGSTROMS) OF 30-595 OF MUTANT ASP-153 IN COMPLEX WITH CHOLINE</scope>
    <scope>FUNCTION</scope>
    <scope>BIOPHYSICOCHEMICAL PROPERTIES</scope>
    <scope>ACTIVITY REGULATION</scope>
    <scope>SUBUNIT</scope>
    <scope>TOPOLOGY</scope>
    <scope>MUTAGENESIS OF GLY-149; GLY-151 AND GLY-153</scope>
</reference>
<reference evidence="27 29" key="17">
    <citation type="journal article" date="2012" name="Nature">
        <title>Alternating-access mechanism in conformationally asymmetric trimers of the betaine transporter BetP.</title>
        <authorList>
            <person name="Perez C."/>
            <person name="Koshy C."/>
            <person name="Yildiz O."/>
            <person name="Ziegler C."/>
        </authorList>
    </citation>
    <scope>X-RAY CRYSTALLOGRAPHY (3.10 ANGSTROMS) OF 41-579 IN COMPLEXES WITH GLYCINE BETAINE AND CHOLINE</scope>
    <scope>FUNCTION</scope>
    <scope>SUBUNIT</scope>
    <scope>TOPOLOGY</scope>
    <scope>MUTAGENESIS OF PHE-156; PHE-369; TRP-373; TRP-374; TRP-377; PHE-380 AND PHE-384</scope>
</reference>
<reference evidence="28" key="18">
    <citation type="journal article" date="2013" name="EMBO J.">
        <title>Structural evidence for functional lipid interactions in the betaine transporter BetP.</title>
        <authorList>
            <person name="Koshy C."/>
            <person name="Schweikhard E.S."/>
            <person name="Gartner R.M."/>
            <person name="Perez C."/>
            <person name="Yildiz O."/>
            <person name="Ziegler C."/>
        </authorList>
    </citation>
    <scope>X-RAY CRYSTALLOGRAPHY (2.70 ANGSTROMS) OF 30-595</scope>
    <scope>FUNCTION</scope>
    <scope>ACTIVITY REGULATION</scope>
    <scope>SUBUNIT</scope>
    <scope>TOPOLOGY</scope>
    <scope>MUTAGENESIS OF GLY-149; MET-150; ILE-152 AND GLY-153</scope>
</reference>
<reference evidence="30" key="19">
    <citation type="journal article" date="2014" name="Nat. Commun.">
        <title>Substrate-bound outward-open state of the betaine transporter BetP provides insights into Na+ coupling.</title>
        <authorList>
            <person name="Perez C."/>
            <person name="Faust B."/>
            <person name="Mehdipour A.R."/>
            <person name="Francesconi K.A."/>
            <person name="Forrest L.R."/>
            <person name="Ziegler C."/>
        </authorList>
    </citation>
    <scope>X-RAY CRYSTALLOGRAPHY (2.80 ANGSTROMS) OF 30-595</scope>
    <scope>SUBUNIT</scope>
    <scope>TOPOLOGY</scope>
    <scope>MUTAGENESIS OF GLY-153 AND ASN-309</scope>
</reference>
<keyword id="KW-0002">3D-structure</keyword>
<keyword id="KW-0997">Cell inner membrane</keyword>
<keyword id="KW-1003">Cell membrane</keyword>
<keyword id="KW-0472">Membrane</keyword>
<keyword id="KW-0479">Metal-binding</keyword>
<keyword id="KW-1185">Reference proteome</keyword>
<keyword id="KW-0915">Sodium</keyword>
<keyword id="KW-0346">Stress response</keyword>
<keyword id="KW-0769">Symport</keyword>
<keyword id="KW-0812">Transmembrane</keyword>
<keyword id="KW-1133">Transmembrane helix</keyword>
<keyword id="KW-0813">Transport</keyword>
<evidence type="ECO:0000256" key="1">
    <source>
        <dbReference type="SAM" id="MobiDB-lite"/>
    </source>
</evidence>
<evidence type="ECO:0000269" key="2">
    <source>
    </source>
</evidence>
<evidence type="ECO:0000269" key="3">
    <source>
    </source>
</evidence>
<evidence type="ECO:0000269" key="4">
    <source>
    </source>
</evidence>
<evidence type="ECO:0000269" key="5">
    <source>
    </source>
</evidence>
<evidence type="ECO:0000269" key="6">
    <source>
    </source>
</evidence>
<evidence type="ECO:0000269" key="7">
    <source>
    </source>
</evidence>
<evidence type="ECO:0000269" key="8">
    <source>
    </source>
</evidence>
<evidence type="ECO:0000269" key="9">
    <source>
    </source>
</evidence>
<evidence type="ECO:0000269" key="10">
    <source>
    </source>
</evidence>
<evidence type="ECO:0000269" key="11">
    <source>
    </source>
</evidence>
<evidence type="ECO:0000269" key="12">
    <source>
    </source>
</evidence>
<evidence type="ECO:0000269" key="13">
    <source>
    </source>
</evidence>
<evidence type="ECO:0000269" key="14">
    <source>
    </source>
</evidence>
<evidence type="ECO:0000269" key="15">
    <source>
    </source>
</evidence>
<evidence type="ECO:0000269" key="16">
    <source>
    </source>
</evidence>
<evidence type="ECO:0000269" key="17">
    <source>
    </source>
</evidence>
<evidence type="ECO:0000269" key="18">
    <source>
    </source>
</evidence>
<evidence type="ECO:0000303" key="19">
    <source>
    </source>
</evidence>
<evidence type="ECO:0000305" key="20"/>
<evidence type="ECO:0000305" key="21">
    <source>
    </source>
</evidence>
<evidence type="ECO:0000305" key="22">
    <source>
    </source>
</evidence>
<evidence type="ECO:0000305" key="23">
    <source>
    </source>
</evidence>
<evidence type="ECO:0000305" key="24">
    <source>
    </source>
</evidence>
<evidence type="ECO:0007744" key="25">
    <source>
        <dbReference type="PDB" id="2WIT"/>
    </source>
</evidence>
<evidence type="ECO:0007744" key="26">
    <source>
        <dbReference type="PDB" id="3P03"/>
    </source>
</evidence>
<evidence type="ECO:0007744" key="27">
    <source>
        <dbReference type="PDB" id="4AIN"/>
    </source>
</evidence>
<evidence type="ECO:0007744" key="28">
    <source>
        <dbReference type="PDB" id="4C7R"/>
    </source>
</evidence>
<evidence type="ECO:0007744" key="29">
    <source>
        <dbReference type="PDB" id="4DOJ"/>
    </source>
</evidence>
<evidence type="ECO:0007744" key="30">
    <source>
        <dbReference type="PDB" id="4LLH"/>
    </source>
</evidence>
<evidence type="ECO:0007829" key="31">
    <source>
        <dbReference type="PDB" id="4AIN"/>
    </source>
</evidence>
<evidence type="ECO:0007829" key="32">
    <source>
        <dbReference type="PDB" id="4C7R"/>
    </source>
</evidence>
<protein>
    <recommendedName>
        <fullName evidence="20">Glycine betaine transporter BetP</fullName>
    </recommendedName>
    <alternativeName>
        <fullName evidence="19">Glycine betaine permease</fullName>
    </alternativeName>
</protein>
<sequence length="595" mass="64209">MTTSDPNPKPIVEDAQPEQITATEELAGLLENPTNLEGKLADAEEEIILEGEDTQASLNWSVIVPALVIVLATVVWGIGFKDSFTNFASSALSAVVDNLGWAFILFGTVFVFFIVVIAASKFGTIRLGRIDEAPEFRTVSWISMMFAAGMGIGLMFYGTTEPLTFYRNGVPGHDEHNVGVAMSTTMFHWTLHPWAIYAIVGLAIAYSTFRVGRKQLLSSAFVPLIGEKGAEGWLGKLIDILAIIATVFGTACSLGLGALQIGAGLSAANIIEDPSDWTIVGIVSVLTLAFIFSAISGVGKGIQYLSNANMVLAALLAIFVFVVGPTVSILNLLPGSIGNYLSNFFQMAGRTAMSADGTAGEWLGSWTIFYWAWWISWSPFVGMFLARISRGRSIREFILGVLLVPAGVSTVWFSIFGGTAIVFEQNGESIWGDGAAEEQLFGLLHALPGGQIMGIIAMILLGTFFITSADSASTVMGTMSQHGQLEANKWVTAAWGVATAAIGLTLLLSGGDNALSNLQNVTIVAATPFLFVVIGLMFALVKDLSNDVIYLEYREQQRFNARLARERRVHNEHRKRELAAKRRRERKASGAGKRR</sequence>
<organism>
    <name type="scientific">Corynebacterium glutamicum (strain ATCC 13032 / DSM 20300 / JCM 1318 / BCRC 11384 / CCUG 27702 / LMG 3730 / NBRC 12168 / NCIMB 10025 / NRRL B-2784 / 534)</name>
    <dbReference type="NCBI Taxonomy" id="196627"/>
    <lineage>
        <taxon>Bacteria</taxon>
        <taxon>Bacillati</taxon>
        <taxon>Actinomycetota</taxon>
        <taxon>Actinomycetes</taxon>
        <taxon>Mycobacteriales</taxon>
        <taxon>Corynebacteriaceae</taxon>
        <taxon>Corynebacterium</taxon>
    </lineage>
</organism>
<comment type="function">
    <text evidence="2 3 6 10 11 13 14 16 18">Involved in response to osmotic stress (PubMed:10625602, PubMed:19262666, PubMed:21364531, PubMed:24141878, PubMed:7642496, PubMed:9446558). High-affinity glycine betaine-specific uptake system, which couples the uptake of glycine betaine to the symport of two Na(+) ions (PubMed:10625602, PubMed:15134432, PubMed:19262666, PubMed:21364531, PubMed:22940865, PubMed:24141878, PubMed:7642496). Transport is driven both by the Na(+) gradient and by the electrical potential (PubMed:10625602, PubMed:7642496). In addition, functions both as an osmosensor and as an osmoregulator that transduces signal to the catalytic part of the carrier protein, which adapts its activity to the extent of osmotic stress (PubMed:10625602, PubMed:11574473, PubMed:9446558).</text>
</comment>
<comment type="activity regulation">
    <text evidence="2 3 5 6 7 9 10 11 14 16 18">Uptake is activated by hyperosmotic stress (PubMed:10625602, PubMed:15134432, PubMed:19262666, PubMed:21364531, PubMed:24141878, PubMed:7642496, PubMed:9446558). Osmoresponsive activation is triggered by a change in the internal K(+) concentration (PubMed:11574473, PubMed:15063732). In addition, shows a pronounced chill stimulation, at temperatures around 10 degrees Celsius (PubMed:15995189, PubMed:17693504). Chill activation may be influenced by the membrane lipid composition (PubMed:17693504). Uptake is completely abolished by the uncoupler CCCP, and to a different extent by the ionophores valinomycin and nigericin (PubMed:7642496).</text>
</comment>
<comment type="biophysicochemical properties">
    <kinetics>
        <KM evidence="16">8.6 uM for glycine betaine</KM>
        <KM evidence="2">3.6 uM for glycine betaine</KM>
        <KM evidence="11">3.5 uM for glycine betaine</KM>
        <KM evidence="6">3 uM for glycine betaine</KM>
        <KM evidence="16">4.1 mM for Na(+)</KM>
        <KM evidence="2">15 mM for Na(+)</KM>
        <KM evidence="6">38.1 mM for Na(+)</KM>
        <Vmax evidence="16">110.0 nmol/min/mg enzyme</Vmax>
        <Vmax evidence="2">2.3 mmol/min/mg enzyme</Vmax>
        <Vmax evidence="11">2264.0 nmol/min/mg enzyme</Vmax>
        <Vmax evidence="6">1693.0 nmol/min/mg enzyme</Vmax>
    </kinetics>
    <phDependence>
        <text evidence="16">Optimum pH is 7.5-8.5.</text>
    </phDependence>
</comment>
<comment type="subunit">
    <text evidence="4 10 11 12 13 14 15">Homotrimer (PubMed:15046983, PubMed:19262666, PubMed:21364531, PubMed:21681199, PubMed:22940865, PubMed:24141878, PubMed:25023443). The monomer can accumulate glycine betaine, but trimerization is required to properly respond to osmotic stress (PubMed:21681199).</text>
</comment>
<comment type="interaction">
    <interactant intactId="EBI-6985171">
        <id>P54582</id>
    </interactant>
    <interactant intactId="EBI-6985171">
        <id>P54582</id>
        <label>betP</label>
    </interactant>
    <organismsDiffer>false</organismsDiffer>
    <experiments>14</experiments>
</comment>
<comment type="subcellular location">
    <subcellularLocation>
        <location evidence="8 10">Cell inner membrane</location>
        <topology evidence="10 11 13 14 15">Multi-pass membrane protein</topology>
    </subcellularLocation>
</comment>
<comment type="induction">
    <text evidence="8 16">Constitutively expressed at a basal level of activity (PubMed:7642496). Induced upon hyperosmotic conditions, resulting in an increase of its transport activity (PubMed:17390131, PubMed:7642496).</text>
</comment>
<comment type="domain">
    <text evidence="6 18">Contains a negatively charged N-terminus and a positively charged C-terminus, which are both involved in sensing and/or transducing osmotic changes to the domain responsible for the translocation of the substrate glycine betaine (PubMed:9446558). The C-terminal domain is directly involved in K(+) sensing or K(+)-dependent activation of BetP (PubMed:15134432).</text>
</comment>
<comment type="disruption phenotype">
    <text evidence="17">Mutant shows strongly decreased glycine betaine uptake.</text>
</comment>
<comment type="similarity">
    <text evidence="20">Belongs to the BCCT transporter (TC 2.A.15) family.</text>
</comment>
<comment type="caution">
    <text evidence="21 22 23">Binds 2 Na(+), but the precise binding sites are still uncertain and may change during the transport cycle.</text>
</comment>
<name>BETP_CORGL</name>
<gene>
    <name evidence="19" type="primary">betP</name>
    <name type="ordered locus">Cgl0892</name>
    <name type="ordered locus">cg1016</name>
</gene>
<feature type="chain" id="PRO_0000201483" description="Glycine betaine transporter BetP">
    <location>
        <begin position="1"/>
        <end position="595"/>
    </location>
</feature>
<feature type="topological domain" description="Cytoplasmic" evidence="24">
    <location>
        <begin position="1"/>
        <end position="59"/>
    </location>
</feature>
<feature type="transmembrane region" description="Helical" evidence="14">
    <location>
        <begin position="60"/>
        <end position="80"/>
    </location>
</feature>
<feature type="topological domain" description="Periplasmic" evidence="20">
    <location>
        <begin position="81"/>
        <end position="98"/>
    </location>
</feature>
<feature type="transmembrane region" description="Helical" evidence="14">
    <location>
        <begin position="99"/>
        <end position="119"/>
    </location>
</feature>
<feature type="topological domain" description="Cytoplasmic" evidence="20">
    <location>
        <begin position="120"/>
        <end position="137"/>
    </location>
</feature>
<feature type="transmembrane region" description="Helical" evidence="14">
    <location>
        <begin position="138"/>
        <end position="158"/>
    </location>
</feature>
<feature type="topological domain" description="Periplasmic" evidence="20">
    <location>
        <begin position="159"/>
        <end position="185"/>
    </location>
</feature>
<feature type="transmembrane region" description="Helical" evidence="14">
    <location>
        <begin position="186"/>
        <end position="206"/>
    </location>
</feature>
<feature type="topological domain" description="Cytoplasmic" evidence="20">
    <location>
        <begin position="207"/>
        <end position="236"/>
    </location>
</feature>
<feature type="transmembrane region" description="Helical" evidence="14">
    <location>
        <begin position="237"/>
        <end position="257"/>
    </location>
</feature>
<feature type="topological domain" description="Periplasmic" evidence="20">
    <location>
        <begin position="258"/>
        <end position="276"/>
    </location>
</feature>
<feature type="transmembrane region" description="Helical" evidence="14">
    <location>
        <begin position="277"/>
        <end position="296"/>
    </location>
</feature>
<feature type="topological domain" description="Cytoplasmic" evidence="20">
    <location>
        <begin position="297"/>
        <end position="299"/>
    </location>
</feature>
<feature type="transmembrane region" description="Helical" evidence="14">
    <location>
        <begin position="300"/>
        <end position="323"/>
    </location>
</feature>
<feature type="topological domain" description="Periplasmic" evidence="20">
    <location>
        <begin position="324"/>
        <end position="365"/>
    </location>
</feature>
<feature type="transmembrane region" description="Helical" evidence="14">
    <location>
        <begin position="366"/>
        <end position="386"/>
    </location>
</feature>
<feature type="topological domain" description="Cytoplasmic" evidence="20">
    <location>
        <begin position="387"/>
        <end position="396"/>
    </location>
</feature>
<feature type="transmembrane region" description="Helical" evidence="14">
    <location>
        <begin position="397"/>
        <end position="417"/>
    </location>
</feature>
<feature type="topological domain" description="Periplasmic" evidence="20">
    <location>
        <begin position="418"/>
        <end position="451"/>
    </location>
</feature>
<feature type="transmembrane region" description="Helical" evidence="14">
    <location>
        <begin position="452"/>
        <end position="476"/>
    </location>
</feature>
<feature type="topological domain" description="Cytoplasmic" evidence="20">
    <location>
        <begin position="477"/>
        <end position="489"/>
    </location>
</feature>
<feature type="transmembrane region" description="Helical" evidence="14">
    <location>
        <begin position="490"/>
        <end position="510"/>
    </location>
</feature>
<feature type="topological domain" description="Periplasmic" evidence="20">
    <location>
        <begin position="511"/>
        <end position="520"/>
    </location>
</feature>
<feature type="transmembrane region" description="Helical" evidence="14">
    <location>
        <begin position="521"/>
        <end position="541"/>
    </location>
</feature>
<feature type="topological domain" description="Cytoplasmic" evidence="24">
    <location>
        <begin position="542"/>
        <end position="595"/>
    </location>
</feature>
<feature type="region of interest" description="Disordered" evidence="1">
    <location>
        <begin position="570"/>
        <end position="595"/>
    </location>
</feature>
<feature type="compositionally biased region" description="Basic residues" evidence="1">
    <location>
        <begin position="581"/>
        <end position="595"/>
    </location>
</feature>
<feature type="binding site" evidence="21 22 23">
    <location>
        <position position="147"/>
    </location>
    <ligand>
        <name>Na(+)</name>
        <dbReference type="ChEBI" id="CHEBI:29101"/>
        <label>1</label>
    </ligand>
</feature>
<feature type="binding site" evidence="21">
    <location>
        <position position="148"/>
    </location>
    <ligand>
        <name>Na(+)</name>
        <dbReference type="ChEBI" id="CHEBI:29101"/>
        <label>2</label>
    </ligand>
</feature>
<feature type="binding site" evidence="21 22 23">
    <location>
        <position position="150"/>
    </location>
    <ligand>
        <name>Na(+)</name>
        <dbReference type="ChEBI" id="CHEBI:29101"/>
        <label>2</label>
    </ligand>
</feature>
<feature type="binding site" evidence="13 27">
    <location>
        <begin position="152"/>
        <end position="153"/>
    </location>
    <ligand>
        <name>glycine betaine</name>
        <dbReference type="ChEBI" id="CHEBI:17750"/>
    </ligand>
</feature>
<feature type="binding site" evidence="13 27">
    <location>
        <position position="253"/>
    </location>
    <ligand>
        <name>glycine betaine</name>
        <dbReference type="ChEBI" id="CHEBI:17750"/>
    </ligand>
</feature>
<feature type="binding site" evidence="21">
    <location>
        <position position="306"/>
    </location>
    <ligand>
        <name>Na(+)</name>
        <dbReference type="ChEBI" id="CHEBI:29101"/>
        <label>1</label>
    </ligand>
</feature>
<feature type="binding site" evidence="21">
    <location>
        <position position="310"/>
    </location>
    <ligand>
        <name>Na(+)</name>
        <dbReference type="ChEBI" id="CHEBI:29101"/>
        <label>1</label>
    </ligand>
</feature>
<feature type="binding site" evidence="10 13 27">
    <location>
        <begin position="373"/>
        <end position="377"/>
    </location>
    <ligand>
        <name>glycine betaine</name>
        <dbReference type="ChEBI" id="CHEBI:17750"/>
    </ligand>
</feature>
<feature type="mutagenesis site" description="Mainly monomeric, shows a decrease in activity and cannot be activated in response to increased osmolality; when associated with A-351." evidence="12">
    <original>W</original>
    <variation>A</variation>
    <location>
        <position position="101"/>
    </location>
</feature>
<feature type="mutagenesis site" description="Strongly decreased betaine transport." evidence="10">
    <original>E</original>
    <variation>A</variation>
    <location>
        <position position="135"/>
    </location>
</feature>
<feature type="mutagenesis site" description="Decreases betaine transport. No effect on activation by increased osmolality." evidence="11 14">
    <original>G</original>
    <variation>A</variation>
    <location>
        <position position="149"/>
    </location>
</feature>
<feature type="mutagenesis site" description="No effect on activation by increased osmolality; when associated with A-152." evidence="14">
    <original>M</original>
    <variation>F</variation>
    <location>
        <position position="150"/>
    </location>
</feature>
<feature type="mutagenesis site" description="Nearly abolishes betaine transport." evidence="11">
    <original>G</original>
    <variation>A</variation>
    <location>
        <position position="151"/>
    </location>
</feature>
<feature type="mutagenesis site" description="No effect on activation by increased osmolality; when associated with F-150." evidence="14">
    <original>I</original>
    <variation>A</variation>
    <location>
        <position position="152"/>
    </location>
</feature>
<feature type="mutagenesis site" description="Decreases betaine transport and alters activation at higher osmolality." evidence="11 14">
    <original>G</original>
    <variation>A</variation>
    <location>
        <position position="153"/>
    </location>
</feature>
<feature type="mutagenesis site" description="Changes substrate specificity, giving rise to proton-coupled choline transport. Decreases sodium-dependent betaine transport." evidence="11 15">
    <original>G</original>
    <variation>D</variation>
    <location>
        <position position="153"/>
    </location>
</feature>
<feature type="mutagenesis site" description="Decreases betaine transport, but has no major effect on affinity for glycine betaine." evidence="13">
    <original>F</original>
    <variation>A</variation>
    <location>
        <position position="156"/>
    </location>
</feature>
<feature type="mutagenesis site" description="Mildly decreased betaine transport." evidence="10">
    <original>W</original>
    <variation>C</variation>
    <location>
        <position position="189"/>
    </location>
</feature>
<feature type="mutagenesis site" description="Strongly decreased betaine transport." evidence="10">
    <original>W</original>
    <variation>L</variation>
    <location>
        <position position="194"/>
    </location>
</feature>
<feature type="mutagenesis site" description="Nearly abolishes betaine transport." evidence="10">
    <original>Y</original>
    <variation>L</variation>
    <location>
        <position position="197"/>
    </location>
</feature>
<feature type="mutagenesis site" description="Nearly abolishes betaine transport." evidence="10">
    <original>R</original>
    <variation>A</variation>
    <location>
        <position position="210"/>
    </location>
</feature>
<feature type="mutagenesis site" description="Strongly decreased betaine transport." evidence="10">
    <original>G</original>
    <variation>L</variation>
    <location>
        <position position="301"/>
    </location>
</feature>
<feature type="mutagenesis site" description="Decreases affinity for sodium ions." evidence="15">
    <original>N</original>
    <variation>A</variation>
    <location>
        <position position="309"/>
    </location>
</feature>
<feature type="mutagenesis site" description="Mainly trimeric, but shows reduced activity at high osmolalities. Mainly monomeric, shows a decrease in activity and cannot be activated in response to increased osmolality; when associated with A-101." evidence="12">
    <original>T</original>
    <variation>A</variation>
    <location>
        <position position="351"/>
    </location>
</feature>
<feature type="mutagenesis site" description="Strongly decreased betaine transport." evidence="10">
    <original>W</original>
    <variation>C</variation>
    <location>
        <position position="362"/>
    </location>
</feature>
<feature type="mutagenesis site" description="No effect on betaine transport." evidence="10">
    <original>W</original>
    <variation>C</variation>
    <location>
        <position position="366"/>
    </location>
</feature>
<feature type="mutagenesis site" description="Decreases affinity for glycine betaine. Decreases betaine transport." evidence="13">
    <original>F</original>
    <variation>G</variation>
    <location>
        <position position="369"/>
    </location>
</feature>
<feature type="mutagenesis site" description="No effect on betaine transport." evidence="10">
    <original>W</original>
    <variation>L</variation>
    <location>
        <position position="371"/>
    </location>
</feature>
<feature type="mutagenesis site" description="Strongly decreases affinity for glycine betaine and betaine transport." evidence="13">
    <original>W</original>
    <variation>A</variation>
    <location>
        <position position="373"/>
    </location>
</feature>
<feature type="mutagenesis site" description="Strongly decreases betaine transport, but has no major effect on affinity for glycine betaine." evidence="13">
    <original>W</original>
    <variation>A</variation>
    <location>
        <position position="374"/>
    </location>
</feature>
<feature type="mutagenesis site" description="No effect on betaine transport." evidence="10">
    <original>W</original>
    <variation>L</variation>
    <location>
        <position position="374"/>
    </location>
</feature>
<feature type="mutagenesis site" description="Abolishes betaine transport." evidence="13">
    <original>W</original>
    <variation>A</variation>
    <location>
        <position position="377"/>
    </location>
</feature>
<feature type="mutagenesis site" description="Nearly abolishes betaine transport." evidence="10">
    <original>W</original>
    <variation>L</variation>
    <location>
        <position position="377"/>
    </location>
</feature>
<feature type="mutagenesis site" description="Decreases betaine transport, but has no effect on affinity for glycine betaine." evidence="13">
    <original>F</original>
    <variation>A</variation>
    <location>
        <position position="380"/>
    </location>
</feature>
<feature type="mutagenesis site" description="Decreases betaine transport, but has no effect on affinity for glycine betaine." evidence="13">
    <original>F</original>
    <variation>A</variation>
    <location>
        <position position="384"/>
    </location>
</feature>
<feature type="mutagenesis site" description="Mildly decreased betaine transport." evidence="10">
    <original>R</original>
    <variation>A</variation>
    <location>
        <position position="387"/>
    </location>
</feature>
<feature type="mutagenesis site" description="Moderately decreased betaine transport." evidence="10">
    <original>R</original>
    <variation>K</variation>
    <location>
        <position position="392"/>
    </location>
</feature>
<feature type="helix" evidence="31">
    <location>
        <begin position="42"/>
        <end position="54"/>
    </location>
</feature>
<feature type="helix" evidence="32">
    <location>
        <begin position="60"/>
        <end position="79"/>
    </location>
</feature>
<feature type="helix" evidence="32">
    <location>
        <begin position="81"/>
        <end position="98"/>
    </location>
</feature>
<feature type="helix" evidence="32">
    <location>
        <begin position="100"/>
        <end position="119"/>
    </location>
</feature>
<feature type="helix" evidence="32">
    <location>
        <begin position="121"/>
        <end position="124"/>
    </location>
</feature>
<feature type="strand" evidence="32">
    <location>
        <begin position="126"/>
        <end position="129"/>
    </location>
</feature>
<feature type="helix" evidence="32">
    <location>
        <begin position="138"/>
        <end position="149"/>
    </location>
</feature>
<feature type="helix" evidence="32">
    <location>
        <begin position="152"/>
        <end position="168"/>
    </location>
</feature>
<feature type="helix" evidence="32">
    <location>
        <begin position="178"/>
        <end position="189"/>
    </location>
</feature>
<feature type="helix" evidence="32">
    <location>
        <begin position="191"/>
        <end position="209"/>
    </location>
</feature>
<feature type="helix" evidence="32">
    <location>
        <begin position="217"/>
        <end position="220"/>
    </location>
</feature>
<feature type="helix" evidence="32">
    <location>
        <begin position="222"/>
        <end position="225"/>
    </location>
</feature>
<feature type="helix" evidence="32">
    <location>
        <begin position="227"/>
        <end position="231"/>
    </location>
</feature>
<feature type="helix" evidence="32">
    <location>
        <begin position="233"/>
        <end position="265"/>
    </location>
</feature>
<feature type="turn" evidence="32">
    <location>
        <begin position="266"/>
        <end position="269"/>
    </location>
</feature>
<feature type="helix" evidence="32">
    <location>
        <begin position="276"/>
        <end position="291"/>
    </location>
</feature>
<feature type="turn" evidence="32">
    <location>
        <begin position="292"/>
        <end position="296"/>
    </location>
</feature>
<feature type="helix" evidence="32">
    <location>
        <begin position="298"/>
        <end position="323"/>
    </location>
</feature>
<feature type="helix" evidence="32">
    <location>
        <begin position="326"/>
        <end position="348"/>
    </location>
</feature>
<feature type="helix" evidence="32">
    <location>
        <begin position="354"/>
        <end position="357"/>
    </location>
</feature>
<feature type="helix" evidence="32">
    <location>
        <begin position="360"/>
        <end position="363"/>
    </location>
</feature>
<feature type="turn" evidence="32">
    <location>
        <begin position="364"/>
        <end position="366"/>
    </location>
</feature>
<feature type="helix" evidence="32">
    <location>
        <begin position="367"/>
        <end position="376"/>
    </location>
</feature>
<feature type="helix" evidence="32">
    <location>
        <begin position="378"/>
        <end position="389"/>
    </location>
</feature>
<feature type="helix" evidence="32">
    <location>
        <begin position="394"/>
        <end position="425"/>
    </location>
</feature>
<feature type="turn" evidence="32">
    <location>
        <begin position="432"/>
        <end position="434"/>
    </location>
</feature>
<feature type="helix" evidence="32">
    <location>
        <begin position="436"/>
        <end position="445"/>
    </location>
</feature>
<feature type="turn" evidence="32">
    <location>
        <begin position="448"/>
        <end position="452"/>
    </location>
</feature>
<feature type="helix" evidence="32">
    <location>
        <begin position="453"/>
        <end position="478"/>
    </location>
</feature>
<feature type="turn" evidence="32">
    <location>
        <begin position="479"/>
        <end position="483"/>
    </location>
</feature>
<feature type="helix" evidence="32">
    <location>
        <begin position="489"/>
        <end position="510"/>
    </location>
</feature>
<feature type="helix" evidence="32">
    <location>
        <begin position="511"/>
        <end position="513"/>
    </location>
</feature>
<feature type="helix" evidence="32">
    <location>
        <begin position="514"/>
        <end position="524"/>
    </location>
</feature>
<feature type="helix" evidence="32">
    <location>
        <begin position="527"/>
        <end position="545"/>
    </location>
</feature>
<feature type="helix" evidence="32">
    <location>
        <begin position="548"/>
        <end position="582"/>
    </location>
</feature>
<feature type="turn" evidence="32">
    <location>
        <begin position="583"/>
        <end position="585"/>
    </location>
</feature>
<accession>P54582</accession>
<proteinExistence type="evidence at protein level"/>